<name>SYS_MYCSS</name>
<organism>
    <name type="scientific">Mycobacterium sp. (strain MCS)</name>
    <dbReference type="NCBI Taxonomy" id="164756"/>
    <lineage>
        <taxon>Bacteria</taxon>
        <taxon>Bacillati</taxon>
        <taxon>Actinomycetota</taxon>
        <taxon>Actinomycetes</taxon>
        <taxon>Mycobacteriales</taxon>
        <taxon>Mycobacteriaceae</taxon>
        <taxon>Mycobacterium</taxon>
    </lineage>
</organism>
<comment type="function">
    <text evidence="1">Catalyzes the attachment of serine to tRNA(Ser). Is also able to aminoacylate tRNA(Sec) with serine, to form the misacylated tRNA L-seryl-tRNA(Sec), which will be further converted into selenocysteinyl-tRNA(Sec).</text>
</comment>
<comment type="catalytic activity">
    <reaction evidence="1">
        <text>tRNA(Ser) + L-serine + ATP = L-seryl-tRNA(Ser) + AMP + diphosphate + H(+)</text>
        <dbReference type="Rhea" id="RHEA:12292"/>
        <dbReference type="Rhea" id="RHEA-COMP:9669"/>
        <dbReference type="Rhea" id="RHEA-COMP:9703"/>
        <dbReference type="ChEBI" id="CHEBI:15378"/>
        <dbReference type="ChEBI" id="CHEBI:30616"/>
        <dbReference type="ChEBI" id="CHEBI:33019"/>
        <dbReference type="ChEBI" id="CHEBI:33384"/>
        <dbReference type="ChEBI" id="CHEBI:78442"/>
        <dbReference type="ChEBI" id="CHEBI:78533"/>
        <dbReference type="ChEBI" id="CHEBI:456215"/>
        <dbReference type="EC" id="6.1.1.11"/>
    </reaction>
</comment>
<comment type="catalytic activity">
    <reaction evidence="1">
        <text>tRNA(Sec) + L-serine + ATP = L-seryl-tRNA(Sec) + AMP + diphosphate + H(+)</text>
        <dbReference type="Rhea" id="RHEA:42580"/>
        <dbReference type="Rhea" id="RHEA-COMP:9742"/>
        <dbReference type="Rhea" id="RHEA-COMP:10128"/>
        <dbReference type="ChEBI" id="CHEBI:15378"/>
        <dbReference type="ChEBI" id="CHEBI:30616"/>
        <dbReference type="ChEBI" id="CHEBI:33019"/>
        <dbReference type="ChEBI" id="CHEBI:33384"/>
        <dbReference type="ChEBI" id="CHEBI:78442"/>
        <dbReference type="ChEBI" id="CHEBI:78533"/>
        <dbReference type="ChEBI" id="CHEBI:456215"/>
        <dbReference type="EC" id="6.1.1.11"/>
    </reaction>
</comment>
<comment type="pathway">
    <text evidence="1">Aminoacyl-tRNA biosynthesis; selenocysteinyl-tRNA(Sec) biosynthesis; L-seryl-tRNA(Sec) from L-serine and tRNA(Sec): step 1/1.</text>
</comment>
<comment type="subunit">
    <text evidence="1">Homodimer. The tRNA molecule binds across the dimer.</text>
</comment>
<comment type="subcellular location">
    <subcellularLocation>
        <location evidence="1">Cytoplasm</location>
    </subcellularLocation>
</comment>
<comment type="domain">
    <text evidence="1">Consists of two distinct domains, a catalytic core and a N-terminal extension that is involved in tRNA binding.</text>
</comment>
<comment type="similarity">
    <text evidence="1">Belongs to the class-II aminoacyl-tRNA synthetase family. Type-1 seryl-tRNA synthetase subfamily.</text>
</comment>
<gene>
    <name evidence="1" type="primary">serS</name>
    <name type="ordered locus">Mmcs_5029</name>
</gene>
<keyword id="KW-0030">Aminoacyl-tRNA synthetase</keyword>
<keyword id="KW-0067">ATP-binding</keyword>
<keyword id="KW-0963">Cytoplasm</keyword>
<keyword id="KW-0436">Ligase</keyword>
<keyword id="KW-0547">Nucleotide-binding</keyword>
<keyword id="KW-0648">Protein biosynthesis</keyword>
<protein>
    <recommendedName>
        <fullName evidence="1">Serine--tRNA ligase</fullName>
        <ecNumber evidence="1">6.1.1.11</ecNumber>
    </recommendedName>
    <alternativeName>
        <fullName evidence="1">Seryl-tRNA synthetase</fullName>
        <shortName evidence="1">SerRS</shortName>
    </alternativeName>
    <alternativeName>
        <fullName evidence="1">Seryl-tRNA(Ser/Sec) synthetase</fullName>
    </alternativeName>
</protein>
<proteinExistence type="inferred from homology"/>
<sequence>MIDLKFLRENPDAVRASQRSRGEDPALVDALLDADAARRAAVSAADNLRAEQKAASKKVGKASPEERPALLTQAKELAEQVKAAEAAQADADRTFTAAHMAISNVVIEGVPAGGEDCFAVLDVVGEPRAIDDPKDHLELGEALGLIDMERGAKVAGSRFYFLTGRGALLQLGLMQLAVRLATDNGFTLVIPPVLVRPEVMAGTGFLGAHADEVYRLESDDMYLVGTSEVPLAGYHADEIIDLSAGPRRYAGWSSCFRREAGSYGKDTRGIIRVHQFDKVEGFIYCKPEDAAAEHDRLLGWQREMLALIEVPYRVIDVAAGDLGSSAARKYDCEAWVPTQQTYRELTSTSNCTTFQARRLSTRYRDENGKPQIAATLNGTLATTRWLVAILENHQQPDGSVRVPAALVPFVGTEVLEP</sequence>
<feature type="chain" id="PRO_1000019741" description="Serine--tRNA ligase">
    <location>
        <begin position="1"/>
        <end position="417"/>
    </location>
</feature>
<feature type="binding site" evidence="1">
    <location>
        <begin position="226"/>
        <end position="228"/>
    </location>
    <ligand>
        <name>L-serine</name>
        <dbReference type="ChEBI" id="CHEBI:33384"/>
    </ligand>
</feature>
<feature type="binding site" evidence="1">
    <location>
        <begin position="257"/>
        <end position="259"/>
    </location>
    <ligand>
        <name>ATP</name>
        <dbReference type="ChEBI" id="CHEBI:30616"/>
    </ligand>
</feature>
<feature type="binding site" evidence="1">
    <location>
        <position position="273"/>
    </location>
    <ligand>
        <name>ATP</name>
        <dbReference type="ChEBI" id="CHEBI:30616"/>
    </ligand>
</feature>
<feature type="binding site" evidence="1">
    <location>
        <position position="280"/>
    </location>
    <ligand>
        <name>L-serine</name>
        <dbReference type="ChEBI" id="CHEBI:33384"/>
    </ligand>
</feature>
<feature type="binding site" evidence="1">
    <location>
        <begin position="344"/>
        <end position="347"/>
    </location>
    <ligand>
        <name>ATP</name>
        <dbReference type="ChEBI" id="CHEBI:30616"/>
    </ligand>
</feature>
<feature type="binding site" evidence="1">
    <location>
        <position position="379"/>
    </location>
    <ligand>
        <name>L-serine</name>
        <dbReference type="ChEBI" id="CHEBI:33384"/>
    </ligand>
</feature>
<evidence type="ECO:0000255" key="1">
    <source>
        <dbReference type="HAMAP-Rule" id="MF_00176"/>
    </source>
</evidence>
<dbReference type="EC" id="6.1.1.11" evidence="1"/>
<dbReference type="EMBL" id="CP000384">
    <property type="protein sequence ID" value="ABG11133.1"/>
    <property type="molecule type" value="Genomic_DNA"/>
</dbReference>
<dbReference type="SMR" id="Q1B1V1"/>
<dbReference type="KEGG" id="mmc:Mmcs_5029"/>
<dbReference type="HOGENOM" id="CLU_023797_0_1_11"/>
<dbReference type="BioCyc" id="MSP164756:G1G6O-5142-MONOMER"/>
<dbReference type="UniPathway" id="UPA00906">
    <property type="reaction ID" value="UER00895"/>
</dbReference>
<dbReference type="GO" id="GO:0005737">
    <property type="term" value="C:cytoplasm"/>
    <property type="evidence" value="ECO:0007669"/>
    <property type="project" value="UniProtKB-SubCell"/>
</dbReference>
<dbReference type="GO" id="GO:0005524">
    <property type="term" value="F:ATP binding"/>
    <property type="evidence" value="ECO:0007669"/>
    <property type="project" value="UniProtKB-UniRule"/>
</dbReference>
<dbReference type="GO" id="GO:0004828">
    <property type="term" value="F:serine-tRNA ligase activity"/>
    <property type="evidence" value="ECO:0007669"/>
    <property type="project" value="UniProtKB-UniRule"/>
</dbReference>
<dbReference type="GO" id="GO:0016260">
    <property type="term" value="P:selenocysteine biosynthetic process"/>
    <property type="evidence" value="ECO:0007669"/>
    <property type="project" value="UniProtKB-UniRule"/>
</dbReference>
<dbReference type="GO" id="GO:0006434">
    <property type="term" value="P:seryl-tRNA aminoacylation"/>
    <property type="evidence" value="ECO:0007669"/>
    <property type="project" value="UniProtKB-UniRule"/>
</dbReference>
<dbReference type="CDD" id="cd00770">
    <property type="entry name" value="SerRS_core"/>
    <property type="match status" value="1"/>
</dbReference>
<dbReference type="FunFam" id="1.10.287.40:FF:000004">
    <property type="entry name" value="Serine--tRNA ligase"/>
    <property type="match status" value="1"/>
</dbReference>
<dbReference type="Gene3D" id="3.30.930.10">
    <property type="entry name" value="Bira Bifunctional Protein, Domain 2"/>
    <property type="match status" value="1"/>
</dbReference>
<dbReference type="Gene3D" id="1.10.287.40">
    <property type="entry name" value="Serine-tRNA synthetase, tRNA binding domain"/>
    <property type="match status" value="1"/>
</dbReference>
<dbReference type="HAMAP" id="MF_00176">
    <property type="entry name" value="Ser_tRNA_synth_type1"/>
    <property type="match status" value="1"/>
</dbReference>
<dbReference type="InterPro" id="IPR002314">
    <property type="entry name" value="aa-tRNA-synt_IIb"/>
</dbReference>
<dbReference type="InterPro" id="IPR006195">
    <property type="entry name" value="aa-tRNA-synth_II"/>
</dbReference>
<dbReference type="InterPro" id="IPR045864">
    <property type="entry name" value="aa-tRNA-synth_II/BPL/LPL"/>
</dbReference>
<dbReference type="InterPro" id="IPR002317">
    <property type="entry name" value="Ser-tRNA-ligase_type_1"/>
</dbReference>
<dbReference type="InterPro" id="IPR015866">
    <property type="entry name" value="Ser-tRNA-synth_1_N"/>
</dbReference>
<dbReference type="InterPro" id="IPR042103">
    <property type="entry name" value="SerRS_1_N_sf"/>
</dbReference>
<dbReference type="InterPro" id="IPR033729">
    <property type="entry name" value="SerRS_core"/>
</dbReference>
<dbReference type="InterPro" id="IPR010978">
    <property type="entry name" value="tRNA-bd_arm"/>
</dbReference>
<dbReference type="NCBIfam" id="TIGR00414">
    <property type="entry name" value="serS"/>
    <property type="match status" value="1"/>
</dbReference>
<dbReference type="PANTHER" id="PTHR11778">
    <property type="entry name" value="SERYL-TRNA SYNTHETASE"/>
    <property type="match status" value="1"/>
</dbReference>
<dbReference type="Pfam" id="PF02403">
    <property type="entry name" value="Seryl_tRNA_N"/>
    <property type="match status" value="1"/>
</dbReference>
<dbReference type="Pfam" id="PF00587">
    <property type="entry name" value="tRNA-synt_2b"/>
    <property type="match status" value="1"/>
</dbReference>
<dbReference type="PIRSF" id="PIRSF001529">
    <property type="entry name" value="Ser-tRNA-synth_IIa"/>
    <property type="match status" value="1"/>
</dbReference>
<dbReference type="PRINTS" id="PR00981">
    <property type="entry name" value="TRNASYNTHSER"/>
</dbReference>
<dbReference type="SUPFAM" id="SSF55681">
    <property type="entry name" value="Class II aaRS and biotin synthetases"/>
    <property type="match status" value="1"/>
</dbReference>
<dbReference type="SUPFAM" id="SSF46589">
    <property type="entry name" value="tRNA-binding arm"/>
    <property type="match status" value="1"/>
</dbReference>
<dbReference type="PROSITE" id="PS50862">
    <property type="entry name" value="AA_TRNA_LIGASE_II"/>
    <property type="match status" value="1"/>
</dbReference>
<reference key="1">
    <citation type="submission" date="2006-06" db="EMBL/GenBank/DDBJ databases">
        <title>Complete sequence of chromosome of Mycobacterium sp. MCS.</title>
        <authorList>
            <consortium name="US DOE Joint Genome Institute"/>
            <person name="Copeland A."/>
            <person name="Lucas S."/>
            <person name="Lapidus A."/>
            <person name="Barry K."/>
            <person name="Detter J.C."/>
            <person name="Glavina del Rio T."/>
            <person name="Hammon N."/>
            <person name="Israni S."/>
            <person name="Dalin E."/>
            <person name="Tice H."/>
            <person name="Pitluck S."/>
            <person name="Martinez M."/>
            <person name="Schmutz J."/>
            <person name="Larimer F."/>
            <person name="Land M."/>
            <person name="Hauser L."/>
            <person name="Kyrpides N."/>
            <person name="Kim E."/>
            <person name="Miller C.D."/>
            <person name="Hughes J.E."/>
            <person name="Anderson A.J."/>
            <person name="Sims R.C."/>
            <person name="Richardson P."/>
        </authorList>
    </citation>
    <scope>NUCLEOTIDE SEQUENCE [LARGE SCALE GENOMIC DNA]</scope>
    <source>
        <strain>MCS</strain>
    </source>
</reference>
<accession>Q1B1V1</accession>